<sequence length="459" mass="51770">MTRRIFGLETEYGITYAHPTDDVTLSADEVARQLFKKVVAWGRSSNVFLRNGSRLYLDVGSHPEYATAECDSVEQLIAHDRGGELILVDLIDDAQRRLAQEGYTGTIHLLKNNTDSAGNSYGCHENYLVRRQGDFTRLADILIPFLITRQVVVGAGKIMSTPQGPRYCFSQRADHMWEAVSSATTRSRPIINTRDEPHADAEFYRRLHVIVGDSNIAEPTTFLKVGATDMVLRLIEAGVPMRDLALDNAMRAIREISHDITGRATVTLSSGKTVTAWQLQEMYVEKVRTYVESLGPLSPTDEAVFELWERALRAVETQDHSLIDRDIDWAIKKRLLDRTQDRLGCALDDPRLARLDLAYHDISPATGLGHRLVSRSMMNRVVSDAEVERASQVAPETTRAHLRGRFVTAAQEQKKDYTVDWVHLKLNDQAQRTVLCKDPFAHVDDRVDQLIDSMRTQAT</sequence>
<accession>C7R405</accession>
<organism>
    <name type="scientific">Jonesia denitrificans (strain ATCC 14870 / DSM 20603 / BCRC 15368 / CIP 55.134 / JCM 11481 / NBRC 15587 / NCTC 10816 / Prevot 55134)</name>
    <name type="common">Listeria denitrificans</name>
    <dbReference type="NCBI Taxonomy" id="471856"/>
    <lineage>
        <taxon>Bacteria</taxon>
        <taxon>Bacillati</taxon>
        <taxon>Actinomycetota</taxon>
        <taxon>Actinomycetes</taxon>
        <taxon>Micrococcales</taxon>
        <taxon>Jonesiaceae</taxon>
        <taxon>Jonesia</taxon>
    </lineage>
</organism>
<feature type="chain" id="PRO_0000395918" description="Pup--protein ligase">
    <location>
        <begin position="1"/>
        <end position="459"/>
    </location>
</feature>
<feature type="active site" description="Proton acceptor" evidence="1">
    <location>
        <position position="58"/>
    </location>
</feature>
<feature type="binding site" evidence="1">
    <location>
        <position position="9"/>
    </location>
    <ligand>
        <name>Mg(2+)</name>
        <dbReference type="ChEBI" id="CHEBI:18420"/>
    </ligand>
</feature>
<feature type="binding site" evidence="1">
    <location>
        <position position="54"/>
    </location>
    <ligand>
        <name>ATP</name>
        <dbReference type="ChEBI" id="CHEBI:30616"/>
    </ligand>
</feature>
<feature type="binding site" evidence="1">
    <location>
        <position position="56"/>
    </location>
    <ligand>
        <name>Mg(2+)</name>
        <dbReference type="ChEBI" id="CHEBI:18420"/>
    </ligand>
</feature>
<feature type="binding site" evidence="1">
    <location>
        <position position="64"/>
    </location>
    <ligand>
        <name>Mg(2+)</name>
        <dbReference type="ChEBI" id="CHEBI:18420"/>
    </ligand>
</feature>
<feature type="binding site" evidence="1">
    <location>
        <position position="67"/>
    </location>
    <ligand>
        <name>ATP</name>
        <dbReference type="ChEBI" id="CHEBI:30616"/>
    </ligand>
</feature>
<feature type="binding site" evidence="1">
    <location>
        <position position="421"/>
    </location>
    <ligand>
        <name>ATP</name>
        <dbReference type="ChEBI" id="CHEBI:30616"/>
    </ligand>
</feature>
<dbReference type="EC" id="6.3.1.19" evidence="1"/>
<dbReference type="EMBL" id="CP001706">
    <property type="protein sequence ID" value="ACV08862.1"/>
    <property type="molecule type" value="Genomic_DNA"/>
</dbReference>
<dbReference type="RefSeq" id="WP_015771490.1">
    <property type="nucleotide sequence ID" value="NC_013174.1"/>
</dbReference>
<dbReference type="SMR" id="C7R405"/>
<dbReference type="STRING" id="471856.Jden_1206"/>
<dbReference type="MEROPS" id="U72.001"/>
<dbReference type="KEGG" id="jde:Jden_1206"/>
<dbReference type="eggNOG" id="COG0638">
    <property type="taxonomic scope" value="Bacteria"/>
</dbReference>
<dbReference type="HOGENOM" id="CLU_040524_0_1_11"/>
<dbReference type="OrthoDB" id="9760627at2"/>
<dbReference type="UniPathway" id="UPA00997"/>
<dbReference type="UniPathway" id="UPA00998"/>
<dbReference type="Proteomes" id="UP000000628">
    <property type="component" value="Chromosome"/>
</dbReference>
<dbReference type="GO" id="GO:0005524">
    <property type="term" value="F:ATP binding"/>
    <property type="evidence" value="ECO:0007669"/>
    <property type="project" value="UniProtKB-UniRule"/>
</dbReference>
<dbReference type="GO" id="GO:0016879">
    <property type="term" value="F:ligase activity, forming carbon-nitrogen bonds"/>
    <property type="evidence" value="ECO:0007669"/>
    <property type="project" value="InterPro"/>
</dbReference>
<dbReference type="GO" id="GO:0000287">
    <property type="term" value="F:magnesium ion binding"/>
    <property type="evidence" value="ECO:0007669"/>
    <property type="project" value="UniProtKB-UniRule"/>
</dbReference>
<dbReference type="GO" id="GO:0019787">
    <property type="term" value="F:ubiquitin-like protein transferase activity"/>
    <property type="evidence" value="ECO:0007669"/>
    <property type="project" value="UniProtKB-UniRule"/>
</dbReference>
<dbReference type="GO" id="GO:0019941">
    <property type="term" value="P:modification-dependent protein catabolic process"/>
    <property type="evidence" value="ECO:0007669"/>
    <property type="project" value="UniProtKB-UniRule"/>
</dbReference>
<dbReference type="GO" id="GO:0010498">
    <property type="term" value="P:proteasomal protein catabolic process"/>
    <property type="evidence" value="ECO:0007669"/>
    <property type="project" value="UniProtKB-UniRule"/>
</dbReference>
<dbReference type="GO" id="GO:0070490">
    <property type="term" value="P:protein pupylation"/>
    <property type="evidence" value="ECO:0007669"/>
    <property type="project" value="UniProtKB-UniRule"/>
</dbReference>
<dbReference type="HAMAP" id="MF_02111">
    <property type="entry name" value="Pup_ligase"/>
    <property type="match status" value="1"/>
</dbReference>
<dbReference type="InterPro" id="IPR022279">
    <property type="entry name" value="Pup_ligase"/>
</dbReference>
<dbReference type="InterPro" id="IPR004347">
    <property type="entry name" value="Pup_ligase/deamidase"/>
</dbReference>
<dbReference type="NCBIfam" id="TIGR03686">
    <property type="entry name" value="pupylate_PafA"/>
    <property type="match status" value="1"/>
</dbReference>
<dbReference type="PANTHER" id="PTHR42307">
    <property type="entry name" value="PUP DEAMIDASE/DEPUPYLASE"/>
    <property type="match status" value="1"/>
</dbReference>
<dbReference type="PANTHER" id="PTHR42307:SF3">
    <property type="entry name" value="PUP--PROTEIN LIGASE"/>
    <property type="match status" value="1"/>
</dbReference>
<dbReference type="Pfam" id="PF03136">
    <property type="entry name" value="Pup_ligase"/>
    <property type="match status" value="1"/>
</dbReference>
<dbReference type="PIRSF" id="PIRSF018077">
    <property type="entry name" value="UCP018077"/>
    <property type="match status" value="1"/>
</dbReference>
<name>PAFA_JONDD</name>
<reference key="1">
    <citation type="journal article" date="2009" name="Stand. Genomic Sci.">
        <title>Complete genome sequence of Jonesia denitrificans type strain (Prevot 55134).</title>
        <authorList>
            <person name="Pukall R."/>
            <person name="Gehrich-Schroter G."/>
            <person name="Lapidus A."/>
            <person name="Nolan M."/>
            <person name="Glavina Del Rio T."/>
            <person name="Lucas S."/>
            <person name="Chen F."/>
            <person name="Tice H."/>
            <person name="Pitluck S."/>
            <person name="Cheng J.F."/>
            <person name="Copeland A."/>
            <person name="Saunders E."/>
            <person name="Brettin T."/>
            <person name="Detter J.C."/>
            <person name="Bruce D."/>
            <person name="Goodwin L."/>
            <person name="Pati A."/>
            <person name="Ivanova N."/>
            <person name="Mavromatis K."/>
            <person name="Ovchinnikova G."/>
            <person name="Chen A."/>
            <person name="Palaniappan K."/>
            <person name="Land M."/>
            <person name="Hauser L."/>
            <person name="Chang Y.J."/>
            <person name="Jeffries C.D."/>
            <person name="Chain P."/>
            <person name="Goker M."/>
            <person name="Bristow J."/>
            <person name="Eisen J.A."/>
            <person name="Markowitz V."/>
            <person name="Hugenholtz P."/>
            <person name="Kyrpides N.C."/>
            <person name="Klenk H.P."/>
            <person name="Han C."/>
        </authorList>
    </citation>
    <scope>NUCLEOTIDE SEQUENCE [LARGE SCALE GENOMIC DNA]</scope>
    <source>
        <strain>ATCC 14870 / DSM 20603 / BCRC 15368 / CIP 55.134 / JCM 11481 / NBRC 15587 / NCTC 10816 / Prevot 55134</strain>
    </source>
</reference>
<proteinExistence type="inferred from homology"/>
<keyword id="KW-0067">ATP-binding</keyword>
<keyword id="KW-0436">Ligase</keyword>
<keyword id="KW-0460">Magnesium</keyword>
<keyword id="KW-0479">Metal-binding</keyword>
<keyword id="KW-0547">Nucleotide-binding</keyword>
<keyword id="KW-1185">Reference proteome</keyword>
<keyword id="KW-0833">Ubl conjugation pathway</keyword>
<comment type="function">
    <text evidence="1">Catalyzes the covalent attachment of the prokaryotic ubiquitin-like protein modifier Pup to the proteasomal substrate proteins, thereby targeting them for proteasomal degradation. This tagging system is termed pupylation. The ligation reaction involves the side-chain carboxylate of the C-terminal glutamate of Pup and the side-chain amino group of a substrate lysine.</text>
</comment>
<comment type="catalytic activity">
    <reaction evidence="1">
        <text>ATP + [prokaryotic ubiquitin-like protein]-L-glutamate + [protein]-L-lysine = ADP + phosphate + N(6)-([prokaryotic ubiquitin-like protein]-gamma-L-glutamyl)-[protein]-L-lysine.</text>
        <dbReference type="EC" id="6.3.1.19"/>
    </reaction>
</comment>
<comment type="pathway">
    <text evidence="1">Protein degradation; proteasomal Pup-dependent pathway.</text>
</comment>
<comment type="pathway">
    <text evidence="1">Protein modification; protein pupylation.</text>
</comment>
<comment type="miscellaneous">
    <text evidence="1">The reaction mechanism probably proceeds via the activation of Pup by phosphorylation of its C-terminal glutamate, which is then subject to nucleophilic attack by the substrate lysine, resulting in an isopeptide bond and the release of phosphate as a good leaving group.</text>
</comment>
<comment type="similarity">
    <text evidence="1">Belongs to the Pup ligase/Pup deamidase family. Pup-conjugating enzyme subfamily.</text>
</comment>
<gene>
    <name evidence="1" type="primary">pafA</name>
    <name type="ordered locus">Jden_1206</name>
</gene>
<evidence type="ECO:0000255" key="1">
    <source>
        <dbReference type="HAMAP-Rule" id="MF_02111"/>
    </source>
</evidence>
<protein>
    <recommendedName>
        <fullName evidence="1">Pup--protein ligase</fullName>
        <ecNumber evidence="1">6.3.1.19</ecNumber>
    </recommendedName>
    <alternativeName>
        <fullName evidence="1">Proteasome accessory factor A</fullName>
    </alternativeName>
    <alternativeName>
        <fullName evidence="1">Pup-conjugating enzyme</fullName>
    </alternativeName>
</protein>